<organism>
    <name type="scientific">Salmonella paratyphi B (strain ATCC BAA-1250 / SPB7)</name>
    <dbReference type="NCBI Taxonomy" id="1016998"/>
    <lineage>
        <taxon>Bacteria</taxon>
        <taxon>Pseudomonadati</taxon>
        <taxon>Pseudomonadota</taxon>
        <taxon>Gammaproteobacteria</taxon>
        <taxon>Enterobacterales</taxon>
        <taxon>Enterobacteriaceae</taxon>
        <taxon>Salmonella</taxon>
    </lineage>
</organism>
<keyword id="KW-0997">Cell inner membrane</keyword>
<keyword id="KW-1003">Cell membrane</keyword>
<keyword id="KW-0963">Cytoplasm</keyword>
<keyword id="KW-0342">GTP-binding</keyword>
<keyword id="KW-0472">Membrane</keyword>
<keyword id="KW-0547">Nucleotide-binding</keyword>
<keyword id="KW-0690">Ribosome biogenesis</keyword>
<keyword id="KW-0694">RNA-binding</keyword>
<keyword id="KW-0699">rRNA-binding</keyword>
<sequence length="301" mass="33881">MSTDKTYCGFIAIVGRPNVGKSTLLNKLLGQKISITSRKAQTTRHRIVGIHTEGPYQAIYVDTPGLHMEEKRAINRLMNKAASSSIGDVELVIFVVEGTRWTPDDEMVLNKLRDGKAPVILAVNKVDNVQEKADLLPHLQFLANQMNFLDIVPISAETGMNVDTIAGIVRKHLPEAIHHFPEDYITDRSQRFMASEIIREKLMRFLGAELPYSVTVEIERFVTNERGGYDINGLILVEREGQKKMVIGNKGAKIKTIGIEARKDMQEMFEAPVHLELWVKVKSGWADDERALRSLGYVDDL</sequence>
<dbReference type="EMBL" id="CP000886">
    <property type="protein sequence ID" value="ABX65782.1"/>
    <property type="molecule type" value="Genomic_DNA"/>
</dbReference>
<dbReference type="RefSeq" id="WP_000102228.1">
    <property type="nucleotide sequence ID" value="NC_010102.1"/>
</dbReference>
<dbReference type="SMR" id="A9N1T2"/>
<dbReference type="KEGG" id="spq:SPAB_00346"/>
<dbReference type="PATRIC" id="fig|1016998.12.peg.328"/>
<dbReference type="HOGENOM" id="CLU_038009_1_2_6"/>
<dbReference type="BioCyc" id="SENT1016998:SPAB_RS01415-MONOMER"/>
<dbReference type="Proteomes" id="UP000008556">
    <property type="component" value="Chromosome"/>
</dbReference>
<dbReference type="GO" id="GO:0005829">
    <property type="term" value="C:cytosol"/>
    <property type="evidence" value="ECO:0007669"/>
    <property type="project" value="TreeGrafter"/>
</dbReference>
<dbReference type="GO" id="GO:0005886">
    <property type="term" value="C:plasma membrane"/>
    <property type="evidence" value="ECO:0007669"/>
    <property type="project" value="UniProtKB-SubCell"/>
</dbReference>
<dbReference type="GO" id="GO:0005525">
    <property type="term" value="F:GTP binding"/>
    <property type="evidence" value="ECO:0007669"/>
    <property type="project" value="UniProtKB-UniRule"/>
</dbReference>
<dbReference type="GO" id="GO:0003924">
    <property type="term" value="F:GTPase activity"/>
    <property type="evidence" value="ECO:0007669"/>
    <property type="project" value="UniProtKB-UniRule"/>
</dbReference>
<dbReference type="GO" id="GO:0043024">
    <property type="term" value="F:ribosomal small subunit binding"/>
    <property type="evidence" value="ECO:0007669"/>
    <property type="project" value="TreeGrafter"/>
</dbReference>
<dbReference type="GO" id="GO:0070181">
    <property type="term" value="F:small ribosomal subunit rRNA binding"/>
    <property type="evidence" value="ECO:0007669"/>
    <property type="project" value="UniProtKB-UniRule"/>
</dbReference>
<dbReference type="GO" id="GO:0000028">
    <property type="term" value="P:ribosomal small subunit assembly"/>
    <property type="evidence" value="ECO:0007669"/>
    <property type="project" value="TreeGrafter"/>
</dbReference>
<dbReference type="CDD" id="cd04163">
    <property type="entry name" value="Era"/>
    <property type="match status" value="1"/>
</dbReference>
<dbReference type="CDD" id="cd22534">
    <property type="entry name" value="KH-II_Era"/>
    <property type="match status" value="1"/>
</dbReference>
<dbReference type="FunFam" id="3.30.300.20:FF:000003">
    <property type="entry name" value="GTPase Era"/>
    <property type="match status" value="1"/>
</dbReference>
<dbReference type="FunFam" id="3.40.50.300:FF:000094">
    <property type="entry name" value="GTPase Era"/>
    <property type="match status" value="1"/>
</dbReference>
<dbReference type="Gene3D" id="3.30.300.20">
    <property type="match status" value="1"/>
</dbReference>
<dbReference type="Gene3D" id="3.40.50.300">
    <property type="entry name" value="P-loop containing nucleotide triphosphate hydrolases"/>
    <property type="match status" value="1"/>
</dbReference>
<dbReference type="HAMAP" id="MF_00367">
    <property type="entry name" value="GTPase_Era"/>
    <property type="match status" value="1"/>
</dbReference>
<dbReference type="InterPro" id="IPR030388">
    <property type="entry name" value="G_ERA_dom"/>
</dbReference>
<dbReference type="InterPro" id="IPR006073">
    <property type="entry name" value="GTP-bd"/>
</dbReference>
<dbReference type="InterPro" id="IPR005662">
    <property type="entry name" value="GTPase_Era-like"/>
</dbReference>
<dbReference type="InterPro" id="IPR015946">
    <property type="entry name" value="KH_dom-like_a/b"/>
</dbReference>
<dbReference type="InterPro" id="IPR004044">
    <property type="entry name" value="KH_dom_type_2"/>
</dbReference>
<dbReference type="InterPro" id="IPR009019">
    <property type="entry name" value="KH_sf_prok-type"/>
</dbReference>
<dbReference type="InterPro" id="IPR027417">
    <property type="entry name" value="P-loop_NTPase"/>
</dbReference>
<dbReference type="InterPro" id="IPR005225">
    <property type="entry name" value="Small_GTP-bd"/>
</dbReference>
<dbReference type="NCBIfam" id="TIGR00436">
    <property type="entry name" value="era"/>
    <property type="match status" value="1"/>
</dbReference>
<dbReference type="NCBIfam" id="NF000908">
    <property type="entry name" value="PRK00089.1"/>
    <property type="match status" value="1"/>
</dbReference>
<dbReference type="NCBIfam" id="TIGR00231">
    <property type="entry name" value="small_GTP"/>
    <property type="match status" value="1"/>
</dbReference>
<dbReference type="PANTHER" id="PTHR42698">
    <property type="entry name" value="GTPASE ERA"/>
    <property type="match status" value="1"/>
</dbReference>
<dbReference type="PANTHER" id="PTHR42698:SF1">
    <property type="entry name" value="GTPASE ERA, MITOCHONDRIAL"/>
    <property type="match status" value="1"/>
</dbReference>
<dbReference type="Pfam" id="PF07650">
    <property type="entry name" value="KH_2"/>
    <property type="match status" value="1"/>
</dbReference>
<dbReference type="Pfam" id="PF01926">
    <property type="entry name" value="MMR_HSR1"/>
    <property type="match status" value="1"/>
</dbReference>
<dbReference type="SUPFAM" id="SSF52540">
    <property type="entry name" value="P-loop containing nucleoside triphosphate hydrolases"/>
    <property type="match status" value="1"/>
</dbReference>
<dbReference type="SUPFAM" id="SSF54814">
    <property type="entry name" value="Prokaryotic type KH domain (KH-domain type II)"/>
    <property type="match status" value="1"/>
</dbReference>
<dbReference type="PROSITE" id="PS51713">
    <property type="entry name" value="G_ERA"/>
    <property type="match status" value="1"/>
</dbReference>
<dbReference type="PROSITE" id="PS50823">
    <property type="entry name" value="KH_TYPE_2"/>
    <property type="match status" value="1"/>
</dbReference>
<name>ERA_SALPB</name>
<protein>
    <recommendedName>
        <fullName evidence="1">GTPase Era</fullName>
    </recommendedName>
</protein>
<reference key="1">
    <citation type="submission" date="2007-11" db="EMBL/GenBank/DDBJ databases">
        <authorList>
            <consortium name="The Salmonella enterica serovar Paratyphi B Genome Sequencing Project"/>
            <person name="McClelland M."/>
            <person name="Sanderson E.K."/>
            <person name="Porwollik S."/>
            <person name="Spieth J."/>
            <person name="Clifton W.S."/>
            <person name="Fulton R."/>
            <person name="Cordes M."/>
            <person name="Wollam A."/>
            <person name="Shah N."/>
            <person name="Pepin K."/>
            <person name="Bhonagiri V."/>
            <person name="Nash W."/>
            <person name="Johnson M."/>
            <person name="Thiruvilangam P."/>
            <person name="Wilson R."/>
        </authorList>
    </citation>
    <scope>NUCLEOTIDE SEQUENCE [LARGE SCALE GENOMIC DNA]</scope>
    <source>
        <strain>ATCC BAA-1250 / SPB7</strain>
    </source>
</reference>
<comment type="function">
    <text evidence="1">An essential GTPase that binds both GDP and GTP, with rapid nucleotide exchange. Plays a role in 16S rRNA processing and 30S ribosomal subunit biogenesis and possibly also in cell cycle regulation and energy metabolism.</text>
</comment>
<comment type="subunit">
    <text evidence="1">Monomer.</text>
</comment>
<comment type="subcellular location">
    <subcellularLocation>
        <location>Cytoplasm</location>
    </subcellularLocation>
    <subcellularLocation>
        <location evidence="1">Cell inner membrane</location>
        <topology evidence="1">Peripheral membrane protein</topology>
    </subcellularLocation>
</comment>
<comment type="similarity">
    <text evidence="1 2">Belongs to the TRAFAC class TrmE-Era-EngA-EngB-Septin-like GTPase superfamily. Era GTPase family.</text>
</comment>
<proteinExistence type="inferred from homology"/>
<gene>
    <name evidence="1" type="primary">era</name>
    <name type="ordered locus">SPAB_00346</name>
</gene>
<evidence type="ECO:0000255" key="1">
    <source>
        <dbReference type="HAMAP-Rule" id="MF_00367"/>
    </source>
</evidence>
<evidence type="ECO:0000255" key="2">
    <source>
        <dbReference type="PROSITE-ProRule" id="PRU01050"/>
    </source>
</evidence>
<accession>A9N1T2</accession>
<feature type="chain" id="PRO_1000079733" description="GTPase Era">
    <location>
        <begin position="1"/>
        <end position="301"/>
    </location>
</feature>
<feature type="domain" description="Era-type G" evidence="2">
    <location>
        <begin position="7"/>
        <end position="175"/>
    </location>
</feature>
<feature type="domain" description="KH type-2" evidence="1">
    <location>
        <begin position="206"/>
        <end position="283"/>
    </location>
</feature>
<feature type="region of interest" description="G1" evidence="2">
    <location>
        <begin position="15"/>
        <end position="22"/>
    </location>
</feature>
<feature type="region of interest" description="G2" evidence="2">
    <location>
        <begin position="41"/>
        <end position="45"/>
    </location>
</feature>
<feature type="region of interest" description="G3" evidence="2">
    <location>
        <begin position="62"/>
        <end position="65"/>
    </location>
</feature>
<feature type="region of interest" description="G4" evidence="2">
    <location>
        <begin position="124"/>
        <end position="127"/>
    </location>
</feature>
<feature type="region of interest" description="G5" evidence="2">
    <location>
        <begin position="154"/>
        <end position="156"/>
    </location>
</feature>
<feature type="binding site" evidence="1">
    <location>
        <begin position="15"/>
        <end position="22"/>
    </location>
    <ligand>
        <name>GTP</name>
        <dbReference type="ChEBI" id="CHEBI:37565"/>
    </ligand>
</feature>
<feature type="binding site" evidence="1">
    <location>
        <begin position="62"/>
        <end position="66"/>
    </location>
    <ligand>
        <name>GTP</name>
        <dbReference type="ChEBI" id="CHEBI:37565"/>
    </ligand>
</feature>
<feature type="binding site" evidence="1">
    <location>
        <begin position="124"/>
        <end position="127"/>
    </location>
    <ligand>
        <name>GTP</name>
        <dbReference type="ChEBI" id="CHEBI:37565"/>
    </ligand>
</feature>